<comment type="similarity">
    <text evidence="1">Belongs to the bacterial ribosomal protein bL35 family.</text>
</comment>
<protein>
    <recommendedName>
        <fullName evidence="1">Large ribosomal subunit protein bL35</fullName>
    </recommendedName>
    <alternativeName>
        <fullName evidence="3">50S ribosomal protein L35</fullName>
    </alternativeName>
</protein>
<proteinExistence type="inferred from homology"/>
<feature type="chain" id="PRO_1000050729" description="Large ribosomal subunit protein bL35">
    <location>
        <begin position="1"/>
        <end position="64"/>
    </location>
</feature>
<feature type="region of interest" description="Disordered" evidence="2">
    <location>
        <begin position="1"/>
        <end position="20"/>
    </location>
</feature>
<feature type="compositionally biased region" description="Basic residues" evidence="2">
    <location>
        <begin position="1"/>
        <end position="15"/>
    </location>
</feature>
<reference key="1">
    <citation type="submission" date="2006-12" db="EMBL/GenBank/DDBJ databases">
        <title>Complete sequence of chromosome 1 of Nocardioides sp. JS614.</title>
        <authorList>
            <person name="Copeland A."/>
            <person name="Lucas S."/>
            <person name="Lapidus A."/>
            <person name="Barry K."/>
            <person name="Detter J.C."/>
            <person name="Glavina del Rio T."/>
            <person name="Hammon N."/>
            <person name="Israni S."/>
            <person name="Dalin E."/>
            <person name="Tice H."/>
            <person name="Pitluck S."/>
            <person name="Thompson L.S."/>
            <person name="Brettin T."/>
            <person name="Bruce D."/>
            <person name="Han C."/>
            <person name="Tapia R."/>
            <person name="Schmutz J."/>
            <person name="Larimer F."/>
            <person name="Land M."/>
            <person name="Hauser L."/>
            <person name="Kyrpides N."/>
            <person name="Kim E."/>
            <person name="Mattes T."/>
            <person name="Gossett J."/>
            <person name="Richardson P."/>
        </authorList>
    </citation>
    <scope>NUCLEOTIDE SEQUENCE [LARGE SCALE GENOMIC DNA]</scope>
    <source>
        <strain>ATCC BAA-499 / JS614</strain>
    </source>
</reference>
<keyword id="KW-1185">Reference proteome</keyword>
<keyword id="KW-0687">Ribonucleoprotein</keyword>
<keyword id="KW-0689">Ribosomal protein</keyword>
<sequence length="64" mass="7120">MPKNKTHSGASKRFRVTGSGKILREKAGKRHNLEKKASKVTRRMTGTTELAKADVKRAKKMLGL</sequence>
<evidence type="ECO:0000255" key="1">
    <source>
        <dbReference type="HAMAP-Rule" id="MF_00514"/>
    </source>
</evidence>
<evidence type="ECO:0000256" key="2">
    <source>
        <dbReference type="SAM" id="MobiDB-lite"/>
    </source>
</evidence>
<evidence type="ECO:0000305" key="3"/>
<gene>
    <name evidence="1" type="primary">rpmI</name>
    <name type="ordered locus">Noca_2460</name>
</gene>
<organism>
    <name type="scientific">Nocardioides sp. (strain ATCC BAA-499 / JS614)</name>
    <dbReference type="NCBI Taxonomy" id="196162"/>
    <lineage>
        <taxon>Bacteria</taxon>
        <taxon>Bacillati</taxon>
        <taxon>Actinomycetota</taxon>
        <taxon>Actinomycetes</taxon>
        <taxon>Propionibacteriales</taxon>
        <taxon>Nocardioidaceae</taxon>
        <taxon>Nocardioides</taxon>
    </lineage>
</organism>
<accession>A1SJH9</accession>
<dbReference type="EMBL" id="CP000509">
    <property type="protein sequence ID" value="ABL81964.1"/>
    <property type="molecule type" value="Genomic_DNA"/>
</dbReference>
<dbReference type="RefSeq" id="WP_011755905.1">
    <property type="nucleotide sequence ID" value="NC_008699.1"/>
</dbReference>
<dbReference type="SMR" id="A1SJH9"/>
<dbReference type="STRING" id="196162.Noca_2460"/>
<dbReference type="KEGG" id="nca:Noca_2460"/>
<dbReference type="eggNOG" id="COG0291">
    <property type="taxonomic scope" value="Bacteria"/>
</dbReference>
<dbReference type="HOGENOM" id="CLU_169643_4_2_11"/>
<dbReference type="OrthoDB" id="9804851at2"/>
<dbReference type="Proteomes" id="UP000000640">
    <property type="component" value="Chromosome"/>
</dbReference>
<dbReference type="GO" id="GO:0022625">
    <property type="term" value="C:cytosolic large ribosomal subunit"/>
    <property type="evidence" value="ECO:0007669"/>
    <property type="project" value="TreeGrafter"/>
</dbReference>
<dbReference type="GO" id="GO:0003735">
    <property type="term" value="F:structural constituent of ribosome"/>
    <property type="evidence" value="ECO:0007669"/>
    <property type="project" value="InterPro"/>
</dbReference>
<dbReference type="GO" id="GO:0006412">
    <property type="term" value="P:translation"/>
    <property type="evidence" value="ECO:0007669"/>
    <property type="project" value="UniProtKB-UniRule"/>
</dbReference>
<dbReference type="FunFam" id="4.10.410.60:FF:000001">
    <property type="entry name" value="50S ribosomal protein L35"/>
    <property type="match status" value="1"/>
</dbReference>
<dbReference type="Gene3D" id="4.10.410.60">
    <property type="match status" value="1"/>
</dbReference>
<dbReference type="HAMAP" id="MF_00514">
    <property type="entry name" value="Ribosomal_bL35"/>
    <property type="match status" value="1"/>
</dbReference>
<dbReference type="InterPro" id="IPR001706">
    <property type="entry name" value="Ribosomal_bL35"/>
</dbReference>
<dbReference type="InterPro" id="IPR021137">
    <property type="entry name" value="Ribosomal_bL35-like"/>
</dbReference>
<dbReference type="InterPro" id="IPR018265">
    <property type="entry name" value="Ribosomal_bL35_CS"/>
</dbReference>
<dbReference type="InterPro" id="IPR037229">
    <property type="entry name" value="Ribosomal_bL35_sf"/>
</dbReference>
<dbReference type="NCBIfam" id="TIGR00001">
    <property type="entry name" value="rpmI_bact"/>
    <property type="match status" value="1"/>
</dbReference>
<dbReference type="PANTHER" id="PTHR33343">
    <property type="entry name" value="54S RIBOSOMAL PROTEIN BL35M"/>
    <property type="match status" value="1"/>
</dbReference>
<dbReference type="PANTHER" id="PTHR33343:SF1">
    <property type="entry name" value="LARGE RIBOSOMAL SUBUNIT PROTEIN BL35M"/>
    <property type="match status" value="1"/>
</dbReference>
<dbReference type="Pfam" id="PF01632">
    <property type="entry name" value="Ribosomal_L35p"/>
    <property type="match status" value="1"/>
</dbReference>
<dbReference type="PRINTS" id="PR00064">
    <property type="entry name" value="RIBOSOMALL35"/>
</dbReference>
<dbReference type="SUPFAM" id="SSF143034">
    <property type="entry name" value="L35p-like"/>
    <property type="match status" value="1"/>
</dbReference>
<dbReference type="PROSITE" id="PS00936">
    <property type="entry name" value="RIBOSOMAL_L35"/>
    <property type="match status" value="1"/>
</dbReference>
<name>RL35_NOCSJ</name>